<proteinExistence type="evidence at transcript level"/>
<protein>
    <recommendedName>
        <fullName>Insulin-like growth factor 1 receptor</fullName>
        <ecNumber>2.7.10.1</ecNumber>
    </recommendedName>
    <alternativeName>
        <fullName>Insulin-like growth factor I receptor</fullName>
        <shortName>IGF-I receptor</shortName>
    </alternativeName>
    <cdAntigenName>CD221</cdAntigenName>
    <component>
        <recommendedName>
            <fullName>Insulin-like growth factor 1 receptor alpha chain</fullName>
        </recommendedName>
    </component>
    <component>
        <recommendedName>
            <fullName>Insulin-like growth factor 1 receptor beta chain</fullName>
        </recommendedName>
    </component>
</protein>
<feature type="chain" id="PRO_0000016679" description="Insulin-like growth factor 1 receptor alpha chain">
    <location>
        <begin position="1" status="less than"/>
        <end position="9"/>
    </location>
</feature>
<feature type="chain" id="PRO_0000016680" description="Insulin-like growth factor 1 receptor beta chain">
    <location>
        <begin position="14"/>
        <end position="640"/>
    </location>
</feature>
<feature type="topological domain" description="Extracellular" evidence="4">
    <location>
        <begin position="14"/>
        <end position="208"/>
    </location>
</feature>
<feature type="transmembrane region" description="Helical" evidence="4">
    <location>
        <begin position="209"/>
        <end position="232"/>
    </location>
</feature>
<feature type="topological domain" description="Cytoplasmic" evidence="4">
    <location>
        <begin position="233"/>
        <end position="640"/>
    </location>
</feature>
<feature type="domain" description="Fibronectin type-III 1" evidence="6">
    <location>
        <begin position="5"/>
        <end position="101"/>
    </location>
</feature>
<feature type="domain" description="Fibronectin type-III 2" evidence="6">
    <location>
        <begin position="107"/>
        <end position="200"/>
    </location>
</feature>
<feature type="domain" description="Protein kinase" evidence="5">
    <location>
        <begin position="272"/>
        <end position="547"/>
    </location>
</feature>
<feature type="region of interest" description="Disordered" evidence="8">
    <location>
        <begin position="555"/>
        <end position="640"/>
    </location>
</feature>
<feature type="short sequence motif" description="IRS1- and SHC1-binding" evidence="1">
    <location>
        <begin position="250"/>
        <end position="253"/>
    </location>
</feature>
<feature type="compositionally biased region" description="Acidic residues" evidence="8">
    <location>
        <begin position="563"/>
        <end position="572"/>
    </location>
</feature>
<feature type="compositionally biased region" description="Low complexity" evidence="8">
    <location>
        <begin position="573"/>
        <end position="589"/>
    </location>
</feature>
<feature type="compositionally biased region" description="Basic and acidic residues" evidence="8">
    <location>
        <begin position="590"/>
        <end position="599"/>
    </location>
</feature>
<feature type="active site" description="Proton acceptor" evidence="5 7">
    <location>
        <position position="408"/>
    </location>
</feature>
<feature type="binding site" evidence="5">
    <location>
        <begin position="278"/>
        <end position="286"/>
    </location>
    <ligand>
        <name>ATP</name>
        <dbReference type="ChEBI" id="CHEBI:30616"/>
    </ligand>
</feature>
<feature type="binding site" evidence="5">
    <location>
        <position position="306"/>
    </location>
    <ligand>
        <name>ATP</name>
        <dbReference type="ChEBI" id="CHEBI:30616"/>
    </ligand>
</feature>
<feature type="modified residue" description="Phosphotyrosine" evidence="2">
    <location>
        <position position="253"/>
    </location>
</feature>
<feature type="modified residue" description="Phosphotyrosine; by autocatalysis" evidence="2">
    <location>
        <position position="434"/>
    </location>
</feature>
<feature type="modified residue" description="Phosphotyrosine; by autocatalysis" evidence="2">
    <location>
        <position position="438"/>
    </location>
</feature>
<feature type="modified residue" description="Phosphotyrosine; by autocatalysis" evidence="2">
    <location>
        <position position="439"/>
    </location>
</feature>
<feature type="modified residue" description="Phosphoserine; by GSK3-beta" evidence="3">
    <location>
        <position position="551"/>
    </location>
</feature>
<feature type="modified residue" description="Phosphoserine" evidence="3">
    <location>
        <position position="555"/>
    </location>
</feature>
<feature type="glycosylation site" description="N-linked (GlcNAc...) asparagine" evidence="4">
    <location>
        <position position="20"/>
    </location>
</feature>
<feature type="glycosylation site" description="N-linked (GlcNAc...) asparagine" evidence="4">
    <location>
        <position position="29"/>
    </location>
</feature>
<feature type="glycosylation site" description="N-linked (GlcNAc...) asparagine" evidence="4">
    <location>
        <position position="37"/>
    </location>
</feature>
<feature type="glycosylation site" description="N-linked (GlcNAc...) asparagine" evidence="4">
    <location>
        <position position="173"/>
    </location>
</feature>
<feature type="glycosylation site" description="N-linked (GlcNAc...) asparagine" evidence="4">
    <location>
        <position position="186"/>
    </location>
</feature>
<feature type="cross-link" description="Glycyl lysine isopeptide (Lys-Gly) (interchain with G-Cter in ubiquitin)" evidence="2">
    <location>
        <position position="441"/>
    </location>
</feature>
<feature type="cross-link" description="Glycyl lysine isopeptide (Lys-Gly) (interchain with G-Cter in ubiquitin)" evidence="2">
    <location>
        <position position="444"/>
    </location>
</feature>
<feature type="non-terminal residue">
    <location>
        <position position="1"/>
    </location>
</feature>
<name>IGF1R_BOVIN</name>
<keyword id="KW-0067">ATP-binding</keyword>
<keyword id="KW-1003">Cell membrane</keyword>
<keyword id="KW-0165">Cleavage on pair of basic residues</keyword>
<keyword id="KW-1015">Disulfide bond</keyword>
<keyword id="KW-0325">Glycoprotein</keyword>
<keyword id="KW-1017">Isopeptide bond</keyword>
<keyword id="KW-0418">Kinase</keyword>
<keyword id="KW-0472">Membrane</keyword>
<keyword id="KW-0547">Nucleotide-binding</keyword>
<keyword id="KW-0597">Phosphoprotein</keyword>
<keyword id="KW-0675">Receptor</keyword>
<keyword id="KW-1185">Reference proteome</keyword>
<keyword id="KW-0677">Repeat</keyword>
<keyword id="KW-0808">Transferase</keyword>
<keyword id="KW-0812">Transmembrane</keyword>
<keyword id="KW-1133">Transmembrane helix</keyword>
<keyword id="KW-0829">Tyrosine-protein kinase</keyword>
<keyword id="KW-0832">Ubl conjugation</keyword>
<reference key="1">
    <citation type="journal article" date="1991" name="DNA Seq.">
        <title>Cloning and characterization of a cDNA encoding the beta-subunit of the bovine insulin-like growth factor-1 receptor.</title>
        <authorList>
            <person name="Sneyers M."/>
            <person name="Kettmann R."/>
            <person name="Massart S."/>
            <person name="Renaville R."/>
            <person name="Burny A."/>
            <person name="Portetelle D."/>
        </authorList>
    </citation>
    <scope>NUCLEOTIDE SEQUENCE [MRNA]</scope>
    <source>
        <tissue>Kidney</tissue>
    </source>
</reference>
<comment type="function">
    <text evidence="1">Receptor tyrosine kinase which mediates actions of insulin-like growth factor 1 (IGF1). Binds IGF1 with high affinity and IGF2 and insulin (INS) with a lower affinity. The activated IGF1R is involved in cell growth and survival control. IGF1R is crucial for tumor transformation and survival of malignant cell. Ligand binding activates the receptor kinase, leading to receptor autophosphorylation, and tyrosines phosphorylation of multiple substrates, that function as signaling adapter proteins including, the insulin-receptor substrates (IRS1/2), Shc and 14-3-3 proteins. Phosphorylation of IRSs proteins lead to the activation of two main signaling pathways: the PI3K-AKT/PKB pathway and the Ras-MAPK pathway. The result of activating the MAPK pathway is increased cellular proliferation, whereas activating the PI3K pathway inhibits apoptosis and stimulates protein synthesis. Phosphorylated IRS1 can activate the 85 kDa regulatory subunit of PI3K (PIK3R1), leading to activation of several downstream substrates, including protein AKT/PKB. AKT phosphorylation, in turn, enhances protein synthesis through mTOR activation and triggers the antiapoptotic effects of IGFIR through phosphorylation and inactivation of BAD. In parallel to PI3K-driven signaling, recruitment of Grb2/SOS by phosphorylated IRS1 or Shc leads to recruitment of Ras and activation of the ras-MAPK pathway. In addition to these two main signaling pathways IGF1R signals also through the Janus kinase/signal transducer and activator of transcription pathway (JAK/STAT). Phosphorylation of JAK proteins can lead to phosphorylation/activation of signal transducers and activators of transcription (STAT) proteins. In particular activation of STAT3, may be essential for the transforming activity of IGF1R. The JAK/STAT pathway activates gene transcription and may be responsible for the transforming activity. JNK kinases can also be activated by the IGF1R. IGF1 exerts inhibiting activities on JNK activation via phosphorylation and inhibition of MAP3K5/ASK1, which is able to directly associate with the IGF1R (By similarity). When present in a hybrid receptor with INSR, binds IGF1 (By similarity).</text>
</comment>
<comment type="catalytic activity">
    <reaction evidence="7">
        <text>L-tyrosyl-[protein] + ATP = O-phospho-L-tyrosyl-[protein] + ADP + H(+)</text>
        <dbReference type="Rhea" id="RHEA:10596"/>
        <dbReference type="Rhea" id="RHEA-COMP:10136"/>
        <dbReference type="Rhea" id="RHEA-COMP:20101"/>
        <dbReference type="ChEBI" id="CHEBI:15378"/>
        <dbReference type="ChEBI" id="CHEBI:30616"/>
        <dbReference type="ChEBI" id="CHEBI:46858"/>
        <dbReference type="ChEBI" id="CHEBI:61978"/>
        <dbReference type="ChEBI" id="CHEBI:456216"/>
        <dbReference type="EC" id="2.7.10.1"/>
    </reaction>
</comment>
<comment type="activity regulation">
    <text evidence="1">Activated by autophosphorylation at Tyr-434, Tyr-438 and Tyr-439 on the kinase activation loop; phosphorylation at all three tyrosine residues is required for optimal kinase activity. Inhibited by MSC1609119A-1, BMS-754807, PQIP, benzimidazole pyridinone, isoquinolinedione, bis-azaindole, 3-cyanoquinoline, 2,4-bis-arylamino-1,3-pyrimidine, pyrrolopyrimidine, pyrrole-5-carboxaldehyde, picropodophyllin (PPP), tyrphostin derivatives. While most inhibitors bind to the ATP binding pocket, MSC1609119A-1 functions as allosteric inhibitor and binds close to the DFG motif and the activation loop (By similarity).</text>
</comment>
<comment type="subunit">
    <text evidence="1 2">Tetramer of 2 alpha and 2 beta chains linked by disulfide bonds. The alpha chains contribute to the formation of the ligand-binding domain, while the beta chain carries the kinase domain. Interacts with PIK3R1 and with the PTB/PID domains of IRS1 and SHC1 in vitro when autophosphorylated on tyrosine residues. Forms a hybrid receptor with INSR, the hybrid is a tetramer consisting of 1 alpha chain and 1 beta chain of INSR and 1 alpha chain and 1 beta chain of IGF1R. Interacts with ARRB1 and ARRB2. Interacts with GRB10. Interacts with RACK1 (By similarity). Interacts with SOCS1, SOCS2 and SOCS3 (By similarity). Interacts with 14-3-3 proteins (By similarity). Interacts with NMD2 (By similarity). Interacts with MAP3K5 (By similarity). Interacts with STAT3 (By similarity). Interacts (nascent precursor form) with ZFAND2B (By similarity).</text>
</comment>
<comment type="subcellular location">
    <subcellularLocation>
        <location evidence="1">Cell membrane</location>
        <topology evidence="1">Single-pass type I membrane protein</topology>
    </subcellularLocation>
</comment>
<comment type="PTM">
    <text evidence="2 3">Autophosphorylated on tyrosine residues in response to ligand binding (By similarity). Autophosphorylation occurs in trans, i.e. one subunit of the dimeric receptor phosphorylates tyrosine residues on the other subunit (By similarity). Autophosphorylation occurs in a sequential manner; Tyr-438 is predominantly phosphorylated first, followed by phosphorylation of Tyr-434 and Tyr-439 (By similarity). While every single phosphorylation increases kinase activity, all three tyrosine residues in the kinase activation loop (Tyr-438, Tyr-434 and Tyr-439) have to be phosphorylated for optimal activity (By similarity). Can be autophosphorylated at additional tyrosine residues (in vitro) (By similarity). Autophosphorylated is followed by phosphorylation of juxtamembrane tyrosines and C-terminal serines (By similarity). May also be phosphorylated at Tyr-434 and Tyr-439 by mTORC2 (By similarity). Phosphorylation of Tyr-253 is required for IRS1- and SHC1-binding (By similarity). Phosphorylation of Ser-551 by GSK-3beta restrains kinase activity and promotes cell surface expression, it requires a priming phosphorylation at Ser-555 (By similarity). Dephosphorylated by PTPN1 (By similarity).</text>
</comment>
<comment type="PTM">
    <text evidence="1">Polyubiquitinated at Lys-441 and Lys-444 through both 'Lys-48' and 'Lys-29' linkages, promoting receptor endocytosis and subsequent degradation by the proteasome. Ubiquitination is facilitated by pre-existing phosphorylation (By similarity).</text>
</comment>
<comment type="PTM">
    <text evidence="1">Sumoylated with SUMO1.</text>
</comment>
<comment type="PTM">
    <text evidence="1">Controlled by regulated intramembrane proteolysis (RIP). Undergoes metalloprotease-dependent constitutive ectodomain shedding to produce a membrane-anchored 52 kDa C-Terminal fragment which is further processed by presenilin gamma-secretase to yield an intracellular 50 kDa fragment (By similarity).</text>
</comment>
<comment type="similarity">
    <text evidence="5">Belongs to the protein kinase superfamily. Tyr protein kinase family. Insulin receptor subfamily.</text>
</comment>
<accession>Q05688</accession>
<dbReference type="EC" id="2.7.10.1"/>
<dbReference type="EMBL" id="X54980">
    <property type="protein sequence ID" value="CAA38724.1"/>
    <property type="molecule type" value="mRNA"/>
</dbReference>
<dbReference type="PIR" id="S23008">
    <property type="entry name" value="S23008"/>
</dbReference>
<dbReference type="RefSeq" id="NP_001231541.1">
    <property type="nucleotide sequence ID" value="NM_001244612.1"/>
</dbReference>
<dbReference type="SMR" id="Q05688"/>
<dbReference type="FunCoup" id="Q05688">
    <property type="interactions" value="828"/>
</dbReference>
<dbReference type="STRING" id="9913.ENSBTAP00000028690"/>
<dbReference type="GlyCosmos" id="Q05688">
    <property type="glycosylation" value="5 sites, No reported glycans"/>
</dbReference>
<dbReference type="GlyGen" id="Q05688">
    <property type="glycosylation" value="5 sites"/>
</dbReference>
<dbReference type="PaxDb" id="9913-ENSBTAP00000028690"/>
<dbReference type="GeneID" id="281848"/>
<dbReference type="KEGG" id="bta:281848"/>
<dbReference type="CTD" id="3480"/>
<dbReference type="eggNOG" id="KOG4258">
    <property type="taxonomic scope" value="Eukaryota"/>
</dbReference>
<dbReference type="HOGENOM" id="CLU_000288_166_0_1"/>
<dbReference type="InParanoid" id="Q05688"/>
<dbReference type="OrthoDB" id="5809444at2759"/>
<dbReference type="Proteomes" id="UP000009136">
    <property type="component" value="Unplaced"/>
</dbReference>
<dbReference type="GO" id="GO:0030424">
    <property type="term" value="C:axon"/>
    <property type="evidence" value="ECO:0000318"/>
    <property type="project" value="GO_Central"/>
</dbReference>
<dbReference type="GO" id="GO:0005737">
    <property type="term" value="C:cytoplasm"/>
    <property type="evidence" value="ECO:0000314"/>
    <property type="project" value="AgBase"/>
</dbReference>
<dbReference type="GO" id="GO:0005899">
    <property type="term" value="C:insulin receptor complex"/>
    <property type="evidence" value="ECO:0000318"/>
    <property type="project" value="GO_Central"/>
</dbReference>
<dbReference type="GO" id="GO:0005886">
    <property type="term" value="C:plasma membrane"/>
    <property type="evidence" value="ECO:0000314"/>
    <property type="project" value="AgBase"/>
</dbReference>
<dbReference type="GO" id="GO:0005524">
    <property type="term" value="F:ATP binding"/>
    <property type="evidence" value="ECO:0007669"/>
    <property type="project" value="UniProtKB-KW"/>
</dbReference>
<dbReference type="GO" id="GO:0005009">
    <property type="term" value="F:insulin receptor activity"/>
    <property type="evidence" value="ECO:0000318"/>
    <property type="project" value="GO_Central"/>
</dbReference>
<dbReference type="GO" id="GO:0043560">
    <property type="term" value="F:insulin receptor substrate binding"/>
    <property type="evidence" value="ECO:0000250"/>
    <property type="project" value="UniProtKB"/>
</dbReference>
<dbReference type="GO" id="GO:0005520">
    <property type="term" value="F:insulin-like growth factor binding"/>
    <property type="evidence" value="ECO:0000315"/>
    <property type="project" value="AgBase"/>
</dbReference>
<dbReference type="GO" id="GO:0005010">
    <property type="term" value="F:insulin-like growth factor receptor activity"/>
    <property type="evidence" value="ECO:0000250"/>
    <property type="project" value="UniProtKB"/>
</dbReference>
<dbReference type="GO" id="GO:0043548">
    <property type="term" value="F:phosphatidylinositol 3-kinase binding"/>
    <property type="evidence" value="ECO:0000250"/>
    <property type="project" value="UniProtKB"/>
</dbReference>
<dbReference type="GO" id="GO:0004713">
    <property type="term" value="F:protein tyrosine kinase activity"/>
    <property type="evidence" value="ECO:0000250"/>
    <property type="project" value="UniProtKB"/>
</dbReference>
<dbReference type="GO" id="GO:0005198">
    <property type="term" value="F:structural molecule activity"/>
    <property type="evidence" value="ECO:0000250"/>
    <property type="project" value="UniProtKB"/>
</dbReference>
<dbReference type="GO" id="GO:0071333">
    <property type="term" value="P:cellular response to glucose stimulus"/>
    <property type="evidence" value="ECO:0000318"/>
    <property type="project" value="GO_Central"/>
</dbReference>
<dbReference type="GO" id="GO:0008286">
    <property type="term" value="P:insulin receptor signaling pathway"/>
    <property type="evidence" value="ECO:0000318"/>
    <property type="project" value="GO_Central"/>
</dbReference>
<dbReference type="GO" id="GO:0048009">
    <property type="term" value="P:insulin-like growth factor receptor signaling pathway"/>
    <property type="evidence" value="ECO:0000250"/>
    <property type="project" value="UniProtKB"/>
</dbReference>
<dbReference type="GO" id="GO:0043066">
    <property type="term" value="P:negative regulation of apoptotic process"/>
    <property type="evidence" value="ECO:0000250"/>
    <property type="project" value="UniProtKB"/>
</dbReference>
<dbReference type="GO" id="GO:0043409">
    <property type="term" value="P:negative regulation of MAPK cascade"/>
    <property type="evidence" value="ECO:0000250"/>
    <property type="project" value="UniProtKB"/>
</dbReference>
<dbReference type="GO" id="GO:0043410">
    <property type="term" value="P:positive regulation of MAPK cascade"/>
    <property type="evidence" value="ECO:0000318"/>
    <property type="project" value="GO_Central"/>
</dbReference>
<dbReference type="GO" id="GO:0051897">
    <property type="term" value="P:positive regulation of phosphatidylinositol 3-kinase/protein kinase B signal transduction"/>
    <property type="evidence" value="ECO:0000318"/>
    <property type="project" value="GO_Central"/>
</dbReference>
<dbReference type="GO" id="GO:0046777">
    <property type="term" value="P:protein autophosphorylation"/>
    <property type="evidence" value="ECO:0000250"/>
    <property type="project" value="UniProtKB"/>
</dbReference>
<dbReference type="GO" id="GO:0046328">
    <property type="term" value="P:regulation of JNK cascade"/>
    <property type="evidence" value="ECO:0000250"/>
    <property type="project" value="UniProtKB"/>
</dbReference>
<dbReference type="CDD" id="cd00063">
    <property type="entry name" value="FN3"/>
    <property type="match status" value="1"/>
</dbReference>
<dbReference type="CDD" id="cd05032">
    <property type="entry name" value="PTKc_InsR_like"/>
    <property type="match status" value="1"/>
</dbReference>
<dbReference type="FunFam" id="2.60.40.10:FF:004722">
    <property type="match status" value="1"/>
</dbReference>
<dbReference type="FunFam" id="2.60.40.10:FF:002810">
    <property type="entry name" value="Insulin-like growth factor 1 receptor"/>
    <property type="match status" value="1"/>
</dbReference>
<dbReference type="FunFam" id="1.10.510.10:FF:000050">
    <property type="entry name" value="Tyrosine-protein kinase receptor"/>
    <property type="match status" value="1"/>
</dbReference>
<dbReference type="FunFam" id="3.30.200.20:FF:000026">
    <property type="entry name" value="Tyrosine-protein kinase receptor"/>
    <property type="match status" value="1"/>
</dbReference>
<dbReference type="Gene3D" id="2.60.40.10">
    <property type="entry name" value="Immunoglobulins"/>
    <property type="match status" value="2"/>
</dbReference>
<dbReference type="Gene3D" id="3.30.200.20">
    <property type="entry name" value="Phosphorylase Kinase, domain 1"/>
    <property type="match status" value="1"/>
</dbReference>
<dbReference type="Gene3D" id="1.10.510.10">
    <property type="entry name" value="Transferase(Phosphotransferase) domain 1"/>
    <property type="match status" value="1"/>
</dbReference>
<dbReference type="InterPro" id="IPR003961">
    <property type="entry name" value="FN3_dom"/>
</dbReference>
<dbReference type="InterPro" id="IPR036116">
    <property type="entry name" value="FN3_sf"/>
</dbReference>
<dbReference type="InterPro" id="IPR013783">
    <property type="entry name" value="Ig-like_fold"/>
</dbReference>
<dbReference type="InterPro" id="IPR011009">
    <property type="entry name" value="Kinase-like_dom_sf"/>
</dbReference>
<dbReference type="InterPro" id="IPR000719">
    <property type="entry name" value="Prot_kinase_dom"/>
</dbReference>
<dbReference type="InterPro" id="IPR017441">
    <property type="entry name" value="Protein_kinase_ATP_BS"/>
</dbReference>
<dbReference type="InterPro" id="IPR050122">
    <property type="entry name" value="RTK"/>
</dbReference>
<dbReference type="InterPro" id="IPR001245">
    <property type="entry name" value="Ser-Thr/Tyr_kinase_cat_dom"/>
</dbReference>
<dbReference type="InterPro" id="IPR008266">
    <property type="entry name" value="Tyr_kinase_AS"/>
</dbReference>
<dbReference type="InterPro" id="IPR020635">
    <property type="entry name" value="Tyr_kinase_cat_dom"/>
</dbReference>
<dbReference type="InterPro" id="IPR002011">
    <property type="entry name" value="Tyr_kinase_rcpt_2_CS"/>
</dbReference>
<dbReference type="PANTHER" id="PTHR24416:SF106">
    <property type="entry name" value="INSULIN-LIKE GROWTH FACTOR 1 RECEPTOR"/>
    <property type="match status" value="1"/>
</dbReference>
<dbReference type="PANTHER" id="PTHR24416">
    <property type="entry name" value="TYROSINE-PROTEIN KINASE RECEPTOR"/>
    <property type="match status" value="1"/>
</dbReference>
<dbReference type="Pfam" id="PF00041">
    <property type="entry name" value="fn3"/>
    <property type="match status" value="1"/>
</dbReference>
<dbReference type="Pfam" id="PF07714">
    <property type="entry name" value="PK_Tyr_Ser-Thr"/>
    <property type="match status" value="1"/>
</dbReference>
<dbReference type="PRINTS" id="PR00109">
    <property type="entry name" value="TYRKINASE"/>
</dbReference>
<dbReference type="SMART" id="SM00060">
    <property type="entry name" value="FN3"/>
    <property type="match status" value="1"/>
</dbReference>
<dbReference type="SMART" id="SM00219">
    <property type="entry name" value="TyrKc"/>
    <property type="match status" value="1"/>
</dbReference>
<dbReference type="SUPFAM" id="SSF49265">
    <property type="entry name" value="Fibronectin type III"/>
    <property type="match status" value="1"/>
</dbReference>
<dbReference type="SUPFAM" id="SSF56112">
    <property type="entry name" value="Protein kinase-like (PK-like)"/>
    <property type="match status" value="1"/>
</dbReference>
<dbReference type="PROSITE" id="PS50853">
    <property type="entry name" value="FN3"/>
    <property type="match status" value="2"/>
</dbReference>
<dbReference type="PROSITE" id="PS00107">
    <property type="entry name" value="PROTEIN_KINASE_ATP"/>
    <property type="match status" value="1"/>
</dbReference>
<dbReference type="PROSITE" id="PS50011">
    <property type="entry name" value="PROTEIN_KINASE_DOM"/>
    <property type="match status" value="1"/>
</dbReference>
<dbReference type="PROSITE" id="PS00109">
    <property type="entry name" value="PROTEIN_KINASE_TYR"/>
    <property type="match status" value="1"/>
</dbReference>
<dbReference type="PROSITE" id="PS00239">
    <property type="entry name" value="RECEPTOR_TYR_KIN_II"/>
    <property type="match status" value="1"/>
</dbReference>
<gene>
    <name type="primary">IGF1R</name>
</gene>
<sequence length="640" mass="72511">NAIFVPRPERKRREVMQIANTTMSSRSRNTTVLDTYNITDPEELETEYPFFESRVDNKERTVISNLRPFTLYRIDIHSCNHEAEKLGCSASNFVFARTMPAEGADDIPGPVTWEPRPENSIFLKWPEPENPNGLILMYEIKYGSQVEDQRECVSRQEYRKYGGAKLNRLNPGNYTARIQATSLSGNGSWTDPVFFYVQAKTTYENFIHLMIALPIAVLLIVGGLVIMLYVFHRKRNSSRLGNGVLYASVNPEYFSAADVYVPDEWEVAREKITMSRELGQGSFGMVYEGVAKGVVKDEPETRVAIKTVNEAASMRERIEFLNEASVMKEFNCHHVVRLLGVVSQGQPTLVIMELMTRGDLKSYLRSLRPEMENNPVLAPPSLSKMIQMAGEIADGMAYLNANKFVHRDLAARNCMVAEDFTVKIGDFGMTRDIYETDYYRKGGKGLLPVRWMSPESLKDGVFTTHSDVWSFGVVLWEIATLAEQPYQGLSNEQVLRFVMEGGLLDKPDNCPDMLFELMRMCWQYNPKMRPSFLEIISSVKDEMEAGFREVSFYYSEENKPPEPEELDLEPENMESVPLDPSASSASLPLPDRHSGHKAENGPGPGVLVLRASFDERQPYAHMNGGRKNERALPLPQSSTC</sequence>
<organism>
    <name type="scientific">Bos taurus</name>
    <name type="common">Bovine</name>
    <dbReference type="NCBI Taxonomy" id="9913"/>
    <lineage>
        <taxon>Eukaryota</taxon>
        <taxon>Metazoa</taxon>
        <taxon>Chordata</taxon>
        <taxon>Craniata</taxon>
        <taxon>Vertebrata</taxon>
        <taxon>Euteleostomi</taxon>
        <taxon>Mammalia</taxon>
        <taxon>Eutheria</taxon>
        <taxon>Laurasiatheria</taxon>
        <taxon>Artiodactyla</taxon>
        <taxon>Ruminantia</taxon>
        <taxon>Pecora</taxon>
        <taxon>Bovidae</taxon>
        <taxon>Bovinae</taxon>
        <taxon>Bos</taxon>
    </lineage>
</organism>
<evidence type="ECO:0000250" key="1"/>
<evidence type="ECO:0000250" key="2">
    <source>
        <dbReference type="UniProtKB" id="P08069"/>
    </source>
</evidence>
<evidence type="ECO:0000250" key="3">
    <source>
        <dbReference type="UniProtKB" id="Q60751"/>
    </source>
</evidence>
<evidence type="ECO:0000255" key="4"/>
<evidence type="ECO:0000255" key="5">
    <source>
        <dbReference type="PROSITE-ProRule" id="PRU00159"/>
    </source>
</evidence>
<evidence type="ECO:0000255" key="6">
    <source>
        <dbReference type="PROSITE-ProRule" id="PRU00316"/>
    </source>
</evidence>
<evidence type="ECO:0000255" key="7">
    <source>
        <dbReference type="PROSITE-ProRule" id="PRU10028"/>
    </source>
</evidence>
<evidence type="ECO:0000256" key="8">
    <source>
        <dbReference type="SAM" id="MobiDB-lite"/>
    </source>
</evidence>